<feature type="chain" id="PRO_0000085475" description="Protein Rev">
    <location>
        <begin position="1"/>
        <end position="133"/>
    </location>
</feature>
<feature type="region of interest" description="RNA-binding (RRE)">
    <location>
        <begin position="13"/>
        <end position="27"/>
    </location>
</feature>
<feature type="region of interest" description="Disordered" evidence="2">
    <location>
        <begin position="22"/>
        <end position="66"/>
    </location>
</feature>
<feature type="region of interest" description="Disordered" evidence="2">
    <location>
        <begin position="104"/>
        <end position="133"/>
    </location>
</feature>
<feature type="short sequence motif" description="Nuclear localization signal and RNA-binding (RRE)" evidence="1">
    <location>
        <begin position="59"/>
        <end position="82"/>
    </location>
</feature>
<feature type="short sequence motif" description="Nuclear export signal" evidence="1">
    <location>
        <begin position="89"/>
        <end position="102"/>
    </location>
</feature>
<feature type="compositionally biased region" description="Basic and acidic residues" evidence="2">
    <location>
        <begin position="22"/>
        <end position="31"/>
    </location>
</feature>
<feature type="compositionally biased region" description="Polar residues" evidence="2">
    <location>
        <begin position="34"/>
        <end position="43"/>
    </location>
</feature>
<feature type="compositionally biased region" description="Basic residues" evidence="2">
    <location>
        <begin position="51"/>
        <end position="66"/>
    </location>
</feature>
<feature type="mutagenesis site" description="Almost complete loss of RRE-binding." evidence="3">
    <original>K</original>
    <variation>A</variation>
    <location>
        <position position="13"/>
    </location>
</feature>
<feature type="mutagenesis site" description="Almost complete loss of RRE-binding." evidence="3">
    <original>E</original>
    <variation>A</variation>
    <location>
        <position position="14"/>
    </location>
</feature>
<feature type="mutagenesis site" description="Almost complete loss of RRE-binding." evidence="3">
    <original>N</original>
    <variation>A</variation>
    <location>
        <position position="15"/>
    </location>
</feature>
<feature type="mutagenesis site" description="Partial loss of RRE-binding." evidence="3">
    <original>V</original>
    <variation>A</variation>
    <location>
        <position position="19"/>
    </location>
</feature>
<feature type="mutagenesis site" description="Almost complete loss of RRE-binding." evidence="3">
    <original>T</original>
    <variation>A</variation>
    <location>
        <position position="20"/>
    </location>
</feature>
<feature type="mutagenesis site" description="Almost complete loss of RRE-binding." evidence="3">
    <original>M</original>
    <variation>A</variation>
    <location>
        <position position="21"/>
    </location>
</feature>
<feature type="mutagenesis site" description="Slight loss of RRE-binding." evidence="3">
    <original>DGE</original>
    <variation>AAA</variation>
    <location>
        <begin position="22"/>
        <end position="24"/>
    </location>
</feature>
<feature type="mutagenesis site" description="Slight loss of RRE-binding." evidence="3">
    <original>K</original>
    <variation>A</variation>
    <location>
        <position position="25"/>
    </location>
</feature>
<feature type="mutagenesis site" description="Slight loss of RRE-binding." evidence="3">
    <original>E</original>
    <variation>A</variation>
    <location>
        <position position="26"/>
    </location>
</feature>
<feature type="mutagenesis site" description="Partial loss of RRE-binding." evidence="3">
    <original>R</original>
    <variation>A</variation>
    <location>
        <position position="27"/>
    </location>
</feature>
<feature type="mutagenesis site" description="No loss of RRE-binding." evidence="3">
    <original>K</original>
    <variation>A</variation>
    <location>
        <position position="28"/>
    </location>
</feature>
<feature type="mutagenesis site" description="No loss of RRE-binding." evidence="3">
    <original>R</original>
    <variation>A</variation>
    <location>
        <position position="29"/>
    </location>
</feature>
<feature type="mutagenesis site" description="No loss of RRE-binding.">
    <original>GFT</original>
    <variation>AAA</variation>
    <location>
        <begin position="31"/>
        <end position="33"/>
    </location>
</feature>
<feature type="mutagenesis site" description="Slight loss of RRE-binding." evidence="3">
    <original>AGQQ</original>
    <variation>GAAA</variation>
    <location>
        <begin position="34"/>
        <end position="37"/>
    </location>
</feature>
<proteinExistence type="evidence at protein level"/>
<name>REV_CAEVC</name>
<keyword id="KW-1035">Host cytoplasm</keyword>
<keyword id="KW-1048">Host nucleus</keyword>
<keyword id="KW-0509">mRNA transport</keyword>
<keyword id="KW-1185">Reference proteome</keyword>
<keyword id="KW-0694">RNA-binding</keyword>
<keyword id="KW-0813">Transport</keyword>
<sequence length="133" mass="15283">MDAGARYMRLTGKENWVEVTMDGEKERKREGFTAGQQDIQNSKYPDIPTGHSHHGNKSRRRRRKSGFWRWLRGIRQQRNKRKSDSTESLEPCLGALAELTLEGAMEKGPAEAARPSADDGNLDKWMAWRTPQK</sequence>
<organismHost>
    <name type="scientific">Capra hircus</name>
    <name type="common">Goat</name>
    <dbReference type="NCBI Taxonomy" id="9925"/>
</organismHost>
<organism>
    <name type="scientific">Caprine arthritis encephalitis virus (strain Cork)</name>
    <name type="common">CAEV-Co</name>
    <dbReference type="NCBI Taxonomy" id="11661"/>
    <lineage>
        <taxon>Viruses</taxon>
        <taxon>Riboviria</taxon>
        <taxon>Pararnavirae</taxon>
        <taxon>Artverviricota</taxon>
        <taxon>Revtraviricetes</taxon>
        <taxon>Ortervirales</taxon>
        <taxon>Retroviridae</taxon>
        <taxon>Orthoretrovirinae</taxon>
        <taxon>Lentivirus</taxon>
        <taxon>Caprine arthritis encephalitis virus</taxon>
    </lineage>
</organism>
<gene>
    <name type="primary">rev</name>
</gene>
<dbReference type="EMBL" id="M33677">
    <property type="status" value="NOT_ANNOTATED_CDS"/>
    <property type="molecule type" value="Genomic_RNA"/>
</dbReference>
<dbReference type="PIR" id="F45345">
    <property type="entry name" value="F45345"/>
</dbReference>
<dbReference type="SMR" id="P33460"/>
<dbReference type="Proteomes" id="UP000203242">
    <property type="component" value="Segment"/>
</dbReference>
<dbReference type="GO" id="GO:0030430">
    <property type="term" value="C:host cell cytoplasm"/>
    <property type="evidence" value="ECO:0007669"/>
    <property type="project" value="UniProtKB-SubCell"/>
</dbReference>
<dbReference type="GO" id="GO:0044196">
    <property type="term" value="C:host cell nucleolus"/>
    <property type="evidence" value="ECO:0007669"/>
    <property type="project" value="UniProtKB-SubCell"/>
</dbReference>
<dbReference type="GO" id="GO:0003723">
    <property type="term" value="F:RNA binding"/>
    <property type="evidence" value="ECO:0007669"/>
    <property type="project" value="UniProtKB-KW"/>
</dbReference>
<dbReference type="GO" id="GO:0051028">
    <property type="term" value="P:mRNA transport"/>
    <property type="evidence" value="ECO:0007669"/>
    <property type="project" value="UniProtKB-KW"/>
</dbReference>
<comment type="function">
    <text evidence="1">Escorts unspliced or incompletely spliced viral pre-mRNAs (late transcripts) out of the nucleus of infected cells. These pre-mRNAs carry a recognition sequence called Rev responsive element (RRE) located in the env gene, that is not present in fully spliced viral mRNAs (early transcripts). This function is essential since most viral proteins are translated from unspliced or partially spliced pre-mRNAs which cannot exit the nucleus by the pathway used by fully processed cellular mRNAs (By similarity).</text>
</comment>
<comment type="subunit">
    <text evidence="1">Homomultimer; when bound to the RRE. Multimeric assembly is essential for activity (By similarity).</text>
</comment>
<comment type="subcellular location">
    <subcellularLocation>
        <location evidence="1">Host nucleus</location>
        <location evidence="1">Host nucleolus</location>
    </subcellularLocation>
    <subcellularLocation>
        <location evidence="1">Host cytoplasm</location>
    </subcellularLocation>
    <text evidence="1">The presence of both nuclear import and nuclear export signals leads to continuous shuttling between the nucleus and cytoplasm.</text>
</comment>
<comment type="domain">
    <text evidence="1">The RNA-binding motif binds to the RRE present in incompletely spliced viral pre-mRNAs. This region also contains the NLS which mediates nuclear localization. These overlapping functions prevent Rev bound to RRE from undesirable return to the nucleus. When Rev binds the RRE, the NLS becomes masked while the NES remains accessible (By similarity).</text>
</comment>
<protein>
    <recommendedName>
        <fullName>Protein Rev</fullName>
    </recommendedName>
    <alternativeName>
        <fullName>Rev-C</fullName>
    </alternativeName>
</protein>
<evidence type="ECO:0000250" key="1"/>
<evidence type="ECO:0000256" key="2">
    <source>
        <dbReference type="SAM" id="MobiDB-lite"/>
    </source>
</evidence>
<evidence type="ECO:0000269" key="3">
    <source>
    </source>
</evidence>
<accession>P33460</accession>
<reference key="1">
    <citation type="journal article" date="1990" name="Virology">
        <title>Nucleotide sequence and transcriptional analysis of molecular clones of CAEV which generate infectious virus.</title>
        <authorList>
            <person name="Saltarelli M."/>
            <person name="Querat G."/>
            <person name="Konings D.A.M."/>
            <person name="Vigne R."/>
            <person name="Clements J.E."/>
        </authorList>
    </citation>
    <scope>NUCLEOTIDE SEQUENCE [GENOMIC RNA]</scope>
</reference>
<reference key="2">
    <citation type="journal article" date="2003" name="Virus Res.">
        <title>Characterization of the caprine arthritis encephalitis virus (CAEV) rev N-terminal elements required for efficient interaction with the RRE.</title>
        <authorList>
            <person name="Abelson M.L."/>
            <person name="Schoborg R.V."/>
        </authorList>
    </citation>
    <scope>RNA-BINDING</scope>
    <scope>MUTAGENESIS OF LYS-13; GLU-14; ASN-15; VAL-19; THR-20; MET-21; 22-ASP--GLU-24; LYS-25; GLU-26; ARG-27; LYS-28; ARG-29; 31-GLY--THR-23 AND 34-ALA--GLN-37</scope>
</reference>